<evidence type="ECO:0000255" key="1">
    <source>
        <dbReference type="HAMAP-Rule" id="MF_00513"/>
    </source>
</evidence>
<evidence type="ECO:0000305" key="2"/>
<reference key="1">
    <citation type="journal article" date="2009" name="PLoS Genet.">
        <title>Organised genome dynamics in the Escherichia coli species results in highly diverse adaptive paths.</title>
        <authorList>
            <person name="Touchon M."/>
            <person name="Hoede C."/>
            <person name="Tenaillon O."/>
            <person name="Barbe V."/>
            <person name="Baeriswyl S."/>
            <person name="Bidet P."/>
            <person name="Bingen E."/>
            <person name="Bonacorsi S."/>
            <person name="Bouchier C."/>
            <person name="Bouvet O."/>
            <person name="Calteau A."/>
            <person name="Chiapello H."/>
            <person name="Clermont O."/>
            <person name="Cruveiller S."/>
            <person name="Danchin A."/>
            <person name="Diard M."/>
            <person name="Dossat C."/>
            <person name="Karoui M.E."/>
            <person name="Frapy E."/>
            <person name="Garry L."/>
            <person name="Ghigo J.M."/>
            <person name="Gilles A.M."/>
            <person name="Johnson J."/>
            <person name="Le Bouguenec C."/>
            <person name="Lescat M."/>
            <person name="Mangenot S."/>
            <person name="Martinez-Jehanne V."/>
            <person name="Matic I."/>
            <person name="Nassif X."/>
            <person name="Oztas S."/>
            <person name="Petit M.A."/>
            <person name="Pichon C."/>
            <person name="Rouy Z."/>
            <person name="Ruf C.S."/>
            <person name="Schneider D."/>
            <person name="Tourret J."/>
            <person name="Vacherie B."/>
            <person name="Vallenet D."/>
            <person name="Medigue C."/>
            <person name="Rocha E.P.C."/>
            <person name="Denamur E."/>
        </authorList>
    </citation>
    <scope>NUCLEOTIDE SEQUENCE [LARGE SCALE GENOMIC DNA]</scope>
    <source>
        <strain>ED1a</strain>
    </source>
</reference>
<proteinExistence type="inferred from homology"/>
<gene>
    <name evidence="1" type="primary">argP</name>
    <name type="synonym">iciA</name>
    <name type="ordered locus">ECED1_3374</name>
</gene>
<name>ARGP_ECO81</name>
<comment type="function">
    <text evidence="1">Controls the transcription of genes involved in arginine and lysine metabolism.</text>
</comment>
<comment type="subunit">
    <text evidence="1">Homodimer.</text>
</comment>
<comment type="similarity">
    <text evidence="2">Belongs to the LysR transcriptional regulatory family.</text>
</comment>
<dbReference type="EMBL" id="CU928162">
    <property type="protein sequence ID" value="CAR09384.1"/>
    <property type="molecule type" value="Genomic_DNA"/>
</dbReference>
<dbReference type="RefSeq" id="WP_000828351.1">
    <property type="nucleotide sequence ID" value="NC_011745.1"/>
</dbReference>
<dbReference type="SMR" id="B7MZ67"/>
<dbReference type="GeneID" id="93779084"/>
<dbReference type="KEGG" id="ecq:ECED1_3374"/>
<dbReference type="HOGENOM" id="CLU_063829_0_0_6"/>
<dbReference type="Proteomes" id="UP000000748">
    <property type="component" value="Chromosome"/>
</dbReference>
<dbReference type="GO" id="GO:0003677">
    <property type="term" value="F:DNA binding"/>
    <property type="evidence" value="ECO:0007669"/>
    <property type="project" value="UniProtKB-UniRule"/>
</dbReference>
<dbReference type="GO" id="GO:0003700">
    <property type="term" value="F:DNA-binding transcription factor activity"/>
    <property type="evidence" value="ECO:0007669"/>
    <property type="project" value="UniProtKB-UniRule"/>
</dbReference>
<dbReference type="CDD" id="cd08428">
    <property type="entry name" value="PBP2_IciA_ArgP"/>
    <property type="match status" value="1"/>
</dbReference>
<dbReference type="FunFam" id="1.10.10.10:FF:000061">
    <property type="entry name" value="HTH-type transcriptional regulator ArgP"/>
    <property type="match status" value="1"/>
</dbReference>
<dbReference type="FunFam" id="3.40.190.290:FF:000002">
    <property type="entry name" value="HTH-type transcriptional regulator ArgP"/>
    <property type="match status" value="1"/>
</dbReference>
<dbReference type="Gene3D" id="3.40.190.290">
    <property type="match status" value="1"/>
</dbReference>
<dbReference type="Gene3D" id="1.10.10.10">
    <property type="entry name" value="Winged helix-like DNA-binding domain superfamily/Winged helix DNA-binding domain"/>
    <property type="match status" value="1"/>
</dbReference>
<dbReference type="HAMAP" id="MF_00513">
    <property type="entry name" value="HTH_type_ArgP"/>
    <property type="match status" value="1"/>
</dbReference>
<dbReference type="InterPro" id="IPR017685">
    <property type="entry name" value="ArgP"/>
</dbReference>
<dbReference type="InterPro" id="IPR023490">
    <property type="entry name" value="ArgP_gammaproteobact"/>
</dbReference>
<dbReference type="InterPro" id="IPR050176">
    <property type="entry name" value="LTTR"/>
</dbReference>
<dbReference type="InterPro" id="IPR005119">
    <property type="entry name" value="LysR_subst-bd"/>
</dbReference>
<dbReference type="InterPro" id="IPR000847">
    <property type="entry name" value="Tscrpt_reg_HTH_LysR"/>
</dbReference>
<dbReference type="InterPro" id="IPR036388">
    <property type="entry name" value="WH-like_DNA-bd_sf"/>
</dbReference>
<dbReference type="InterPro" id="IPR036390">
    <property type="entry name" value="WH_DNA-bd_sf"/>
</dbReference>
<dbReference type="NCBIfam" id="TIGR03298">
    <property type="entry name" value="argP"/>
    <property type="match status" value="1"/>
</dbReference>
<dbReference type="NCBIfam" id="NF002964">
    <property type="entry name" value="PRK03635.1"/>
    <property type="match status" value="1"/>
</dbReference>
<dbReference type="NCBIfam" id="NF009888">
    <property type="entry name" value="PRK13348.1"/>
    <property type="match status" value="1"/>
</dbReference>
<dbReference type="PANTHER" id="PTHR30579:SF2">
    <property type="entry name" value="HTH-TYPE TRANSCRIPTIONAL REGULATOR ARGP"/>
    <property type="match status" value="1"/>
</dbReference>
<dbReference type="PANTHER" id="PTHR30579">
    <property type="entry name" value="TRANSCRIPTIONAL REGULATOR"/>
    <property type="match status" value="1"/>
</dbReference>
<dbReference type="Pfam" id="PF00126">
    <property type="entry name" value="HTH_1"/>
    <property type="match status" value="1"/>
</dbReference>
<dbReference type="Pfam" id="PF03466">
    <property type="entry name" value="LysR_substrate"/>
    <property type="match status" value="1"/>
</dbReference>
<dbReference type="PRINTS" id="PR00039">
    <property type="entry name" value="HTHLYSR"/>
</dbReference>
<dbReference type="SUPFAM" id="SSF53850">
    <property type="entry name" value="Periplasmic binding protein-like II"/>
    <property type="match status" value="1"/>
</dbReference>
<dbReference type="SUPFAM" id="SSF46785">
    <property type="entry name" value="Winged helix' DNA-binding domain"/>
    <property type="match status" value="1"/>
</dbReference>
<dbReference type="PROSITE" id="PS50931">
    <property type="entry name" value="HTH_LYSR"/>
    <property type="match status" value="1"/>
</dbReference>
<keyword id="KW-0238">DNA-binding</keyword>
<keyword id="KW-0804">Transcription</keyword>
<keyword id="KW-0805">Transcription regulation</keyword>
<sequence length="297" mass="33472">MKRPDYRTLQALDAVIRERGFERAAQKLCITQSAVSQRIKQLENMFGQPLLVRTVPPRPTEQGQKLLALLRQVELLEEEWLGDEQTGSTPLLLSLAVNADSLATWLLPALAPVLADSPIRLNLQVEDETRTQERLRRGEVVGAVSIQHQALPSCLVDKLGALDYLFVSSKPFAEKYFPNGVTRSALLKAPVVAFDHLDDMHQAFLQQNFDLPPGSVPCHIVNSSEAFVQLARQGTTCCMIPHLQIEKELASGELIDLTPGLFQRRMLYWHRFAPESRMMRKVTDALLDYGHKVLRQD</sequence>
<accession>B7MZ67</accession>
<feature type="chain" id="PRO_1000146108" description="HTH-type transcriptional regulator ArgP">
    <location>
        <begin position="1"/>
        <end position="297"/>
    </location>
</feature>
<feature type="domain" description="HTH lysR-type" evidence="1">
    <location>
        <begin position="4"/>
        <end position="60"/>
    </location>
</feature>
<feature type="DNA-binding region" description="H-T-H motif" evidence="1">
    <location>
        <begin position="21"/>
        <end position="40"/>
    </location>
</feature>
<organism>
    <name type="scientific">Escherichia coli O81 (strain ED1a)</name>
    <dbReference type="NCBI Taxonomy" id="585397"/>
    <lineage>
        <taxon>Bacteria</taxon>
        <taxon>Pseudomonadati</taxon>
        <taxon>Pseudomonadota</taxon>
        <taxon>Gammaproteobacteria</taxon>
        <taxon>Enterobacterales</taxon>
        <taxon>Enterobacteriaceae</taxon>
        <taxon>Escherichia</taxon>
    </lineage>
</organism>
<protein>
    <recommendedName>
        <fullName evidence="1">HTH-type transcriptional regulator ArgP</fullName>
    </recommendedName>
</protein>